<evidence type="ECO:0000250" key="1">
    <source>
        <dbReference type="UniProtKB" id="P08957"/>
    </source>
</evidence>
<evidence type="ECO:0000250" key="2">
    <source>
        <dbReference type="UniProtKB" id="Q89Z59"/>
    </source>
</evidence>
<evidence type="ECO:0000256" key="3">
    <source>
        <dbReference type="SAM" id="MobiDB-lite"/>
    </source>
</evidence>
<evidence type="ECO:0000303" key="4">
    <source>
    </source>
</evidence>
<evidence type="ECO:0000303" key="5">
    <source>
    </source>
</evidence>
<evidence type="ECO:0000305" key="6"/>
<name>T1M_SALTY</name>
<organism>
    <name type="scientific">Salmonella typhimurium (strain LT2 / SGSC1412 / ATCC 700720)</name>
    <dbReference type="NCBI Taxonomy" id="99287"/>
    <lineage>
        <taxon>Bacteria</taxon>
        <taxon>Pseudomonadati</taxon>
        <taxon>Pseudomonadota</taxon>
        <taxon>Gammaproteobacteria</taxon>
        <taxon>Enterobacterales</taxon>
        <taxon>Enterobacteriaceae</taxon>
        <taxon>Salmonella</taxon>
    </lineage>
</organism>
<reference key="1">
    <citation type="journal article" date="1992" name="Proc. Natl. Acad. Sci. U.S.A.">
        <title>Roles of selection and recombination in the evolution of type I restriction-modification systems in enterobacteria.</title>
        <authorList>
            <person name="Sharp P.M."/>
            <person name="Kelleher J.E."/>
            <person name="Daniel A.S."/>
            <person name="Cowan G.M."/>
            <person name="Murray N.E."/>
        </authorList>
    </citation>
    <scope>NUCLEOTIDE SEQUENCE [GENOMIC DNA]</scope>
    <source>
        <strain>LT2</strain>
    </source>
</reference>
<reference key="2">
    <citation type="journal article" date="2001" name="Nature">
        <title>Complete genome sequence of Salmonella enterica serovar Typhimurium LT2.</title>
        <authorList>
            <person name="McClelland M."/>
            <person name="Sanderson K.E."/>
            <person name="Spieth J."/>
            <person name="Clifton S.W."/>
            <person name="Latreille P."/>
            <person name="Courtney L."/>
            <person name="Porwollik S."/>
            <person name="Ali J."/>
            <person name="Dante M."/>
            <person name="Du F."/>
            <person name="Hou S."/>
            <person name="Layman D."/>
            <person name="Leonard S."/>
            <person name="Nguyen C."/>
            <person name="Scott K."/>
            <person name="Holmes A."/>
            <person name="Grewal N."/>
            <person name="Mulvaney E."/>
            <person name="Ryan E."/>
            <person name="Sun H."/>
            <person name="Florea L."/>
            <person name="Miller W."/>
            <person name="Stoneking T."/>
            <person name="Nhan M."/>
            <person name="Waterston R."/>
            <person name="Wilson R.K."/>
        </authorList>
    </citation>
    <scope>NUCLEOTIDE SEQUENCE [LARGE SCALE GENOMIC DNA]</scope>
    <source>
        <strain>LT2 / SGSC1412 / ATCC 700720</strain>
    </source>
</reference>
<reference key="3">
    <citation type="journal article" date="1987" name="Mol. Microbiol.">
        <title>Reassortment of DNA recognition domains and the evolution of new specificities.</title>
        <authorList>
            <person name="Gann A.A.F."/>
            <person name="Campbell A.J.B."/>
            <person name="Collins J.F."/>
            <person name="Coulson A.F.W."/>
            <person name="Murray N.E."/>
        </authorList>
    </citation>
    <scope>NUCLEOTIDE SEQUENCE [GENOMIC DNA] OF 455-529</scope>
    <source>
        <strain>LT2</strain>
    </source>
</reference>
<reference key="4">
    <citation type="journal article" date="2003" name="Nucleic Acids Res.">
        <title>A nomenclature for restriction enzymes, DNA methyltransferases, homing endonucleases and their genes.</title>
        <authorList>
            <person name="Roberts R.J."/>
            <person name="Belfort M."/>
            <person name="Bestor T."/>
            <person name="Bhagwat A.S."/>
            <person name="Bickle T.A."/>
            <person name="Bitinaite J."/>
            <person name="Blumenthal R.M."/>
            <person name="Degtyarev S.K."/>
            <person name="Dryden D.T."/>
            <person name="Dybvig K."/>
            <person name="Firman K."/>
            <person name="Gromova E.S."/>
            <person name="Gumport R.I."/>
            <person name="Halford S.E."/>
            <person name="Hattman S."/>
            <person name="Heitman J."/>
            <person name="Hornby D.P."/>
            <person name="Janulaitis A."/>
            <person name="Jeltsch A."/>
            <person name="Josephsen J."/>
            <person name="Kiss A."/>
            <person name="Klaenhammer T.R."/>
            <person name="Kobayashi I."/>
            <person name="Kong H."/>
            <person name="Krueger D.H."/>
            <person name="Lacks S."/>
            <person name="Marinus M.G."/>
            <person name="Miyahara M."/>
            <person name="Morgan R.D."/>
            <person name="Murray N.E."/>
            <person name="Nagaraja V."/>
            <person name="Piekarowicz A."/>
            <person name="Pingoud A."/>
            <person name="Raleigh E."/>
            <person name="Rao D.N."/>
            <person name="Reich N."/>
            <person name="Repin V.E."/>
            <person name="Selker E.U."/>
            <person name="Shaw P.C."/>
            <person name="Stein D.C."/>
            <person name="Stoddard B.L."/>
            <person name="Szybalski W."/>
            <person name="Trautner T.A."/>
            <person name="Van Etten J.L."/>
            <person name="Vitor J.M."/>
            <person name="Wilson G.G."/>
            <person name="Xu S.Y."/>
        </authorList>
    </citation>
    <scope>NOMENCLATURE</scope>
    <scope>SUBTYPE</scope>
</reference>
<accession>P40813</accession>
<accession>Q6LAL9</accession>
<gene>
    <name evidence="5" type="primary">hsdM</name>
    <name type="synonym">hsdT</name>
    <name type="ordered locus">STM4525</name>
</gene>
<protein>
    <recommendedName>
        <fullName>Type I restriction enzyme StySJI methylase subunit</fullName>
        <shortName>M protein</shortName>
        <ecNumber evidence="1">2.1.1.72</ecNumber>
    </recommendedName>
    <alternativeName>
        <fullName evidence="4">Type I methyltransferase M.StySJI</fullName>
        <shortName evidence="4">M.StySJI</shortName>
    </alternativeName>
    <alternativeName>
        <fullName evidence="5">Type I restriction and modification system SB</fullName>
    </alternativeName>
</protein>
<keyword id="KW-0238">DNA-binding</keyword>
<keyword id="KW-0489">Methyltransferase</keyword>
<keyword id="KW-1185">Reference proteome</keyword>
<keyword id="KW-0680">Restriction system</keyword>
<keyword id="KW-0949">S-adenosyl-L-methionine</keyword>
<keyword id="KW-0808">Transferase</keyword>
<proteinExistence type="inferred from homology"/>
<comment type="function">
    <text evidence="1 4">The subtype gamma methyltransferase (M) subunit of a type I restriction enzyme. The M and S subunits together form a methyltransferase (MTase) that methylates two adenine residues of the sequence 5'-GAGN(6)GTRC-3'. In the presence of the R subunit the complex can also act as an endonuclease, binding to the same target sequence but cutting the DNA some distance from this site. Whether the DNA is cut or modified depends on the methylation state of the target sequence. When the target site is unmodified, the DNA is cut. When the target site is hemimethylated, the complex acts as a maintenance MTase modifying the DNA so that both strands become methylated. After locating a non-methylated recognition site, the enzyme complex serves as a molecular motor that translocates DNA in an ATP-dependent manner until a collision occurs that triggers cleavage.</text>
</comment>
<comment type="catalytic activity">
    <reaction evidence="1">
        <text>a 2'-deoxyadenosine in DNA + S-adenosyl-L-methionine = an N(6)-methyl-2'-deoxyadenosine in DNA + S-adenosyl-L-homocysteine + H(+)</text>
        <dbReference type="Rhea" id="RHEA:15197"/>
        <dbReference type="Rhea" id="RHEA-COMP:12418"/>
        <dbReference type="Rhea" id="RHEA-COMP:12419"/>
        <dbReference type="ChEBI" id="CHEBI:15378"/>
        <dbReference type="ChEBI" id="CHEBI:57856"/>
        <dbReference type="ChEBI" id="CHEBI:59789"/>
        <dbReference type="ChEBI" id="CHEBI:90615"/>
        <dbReference type="ChEBI" id="CHEBI:90616"/>
        <dbReference type="EC" id="2.1.1.72"/>
    </reaction>
</comment>
<comment type="subunit">
    <text evidence="1">The type I restriction/modification system is composed of three polypeptides R, M and S; the restriction enzyme has stoichiometry R(2)M(2)S(1) while the methyltransferase is M(2)S(1).</text>
</comment>
<comment type="miscellaneous">
    <text evidence="1">Type I restriction and modification enzymes are complex, multifunctional systems which require ATP, S-adenosyl methionine and Mg(2+) as cofactors and, in addition to their endonucleolytic and methylase activities, are potent DNA-dependent ATPases.</text>
</comment>
<comment type="similarity">
    <text evidence="6">Belongs to the N(4)/N(6)-methyltransferase family.</text>
</comment>
<sequence>MNNNDLVAKLWKLCDNLRDGGVSYQNYVNELASLLFLKMCKETGQEADYLPEGYRWDDLKSRIGQDQMQFYRNLLVQLGSDEKKLVQAVFHNVSTTIEQPKQLTELVSYMDALDWYNGNHGKSRDDFGDMYEGLLQKNANETKSGAGQYFTPRPLIKTIIHLLKPQPREVVQDPAAGTAGFLIEADRYVKSQTNDLDDLDGDTQDFQIHRAFIGLELVPGTRRLALMNCLLHDIEGNLDHGGAIRLGNTLGSDGENLPKAHIVATNPPFGSAAGTNITRTFVHPTSNKQLCFMQHIIETLHPGGRAAVVVPDNVLFEGGKGTDIRRDLMDKCHLHTILRLPTGIFYAQGVKTNVLFFTKGTVTNPHQDKNCTDDVWVYDLRTNMPSFGKRTPFTEQHLQPFETVYGEDPHGLSPREEGEWSFNAEESEVADSEENKNTDQHQATSRWRKFSREWIRSAKSDSLDISWLKDKDSIDADSLPEPDVLAAEAMGELVQALGELDALMRELGAGDEADAQRQLLNEAFGEVKA</sequence>
<feature type="chain" id="PRO_0000088026" description="Type I restriction enzyme StySJI methylase subunit">
    <location>
        <begin position="1"/>
        <end position="529"/>
    </location>
</feature>
<feature type="region of interest" description="Disordered" evidence="3">
    <location>
        <begin position="405"/>
        <end position="444"/>
    </location>
</feature>
<feature type="compositionally biased region" description="Basic and acidic residues" evidence="3">
    <location>
        <begin position="407"/>
        <end position="418"/>
    </location>
</feature>
<feature type="binding site" evidence="2">
    <location>
        <begin position="148"/>
        <end position="153"/>
    </location>
    <ligand>
        <name>S-adenosyl-L-methionine</name>
        <dbReference type="ChEBI" id="CHEBI:59789"/>
    </ligand>
</feature>
<feature type="binding site" evidence="2">
    <location>
        <begin position="178"/>
        <end position="180"/>
    </location>
    <ligand>
        <name>S-adenosyl-L-methionine</name>
        <dbReference type="ChEBI" id="CHEBI:59789"/>
    </ligand>
</feature>
<feature type="binding site" evidence="2">
    <location>
        <position position="216"/>
    </location>
    <ligand>
        <name>S-adenosyl-L-methionine</name>
        <dbReference type="ChEBI" id="CHEBI:59789"/>
    </ligand>
</feature>
<dbReference type="EC" id="2.1.1.72" evidence="1"/>
<dbReference type="EMBL" id="L02506">
    <property type="protein sequence ID" value="AAA19429.1"/>
    <property type="molecule type" value="Unassigned_DNA"/>
</dbReference>
<dbReference type="EMBL" id="AE006468">
    <property type="protein sequence ID" value="AAL23343.1"/>
    <property type="molecule type" value="Genomic_DNA"/>
</dbReference>
<dbReference type="EMBL" id="Y00524">
    <property type="protein sequence ID" value="CAA68579.1"/>
    <property type="molecule type" value="Genomic_DNA"/>
</dbReference>
<dbReference type="RefSeq" id="NP_463384.1">
    <property type="nucleotide sequence ID" value="NC_003197.2"/>
</dbReference>
<dbReference type="RefSeq" id="WP_001063190.1">
    <property type="nucleotide sequence ID" value="NC_003197.2"/>
</dbReference>
<dbReference type="SMR" id="P40813"/>
<dbReference type="STRING" id="99287.STM4525"/>
<dbReference type="PaxDb" id="99287-STM4525"/>
<dbReference type="GeneID" id="1256051"/>
<dbReference type="KEGG" id="stm:STM4525"/>
<dbReference type="PATRIC" id="fig|99287.12.peg.4768"/>
<dbReference type="HOGENOM" id="CLU_018284_2_0_6"/>
<dbReference type="PhylomeDB" id="P40813"/>
<dbReference type="BioCyc" id="SENT99287:STM4525-MONOMER"/>
<dbReference type="PRO" id="PR:P40813"/>
<dbReference type="Proteomes" id="UP000001014">
    <property type="component" value="Chromosome"/>
</dbReference>
<dbReference type="GO" id="GO:0003677">
    <property type="term" value="F:DNA binding"/>
    <property type="evidence" value="ECO:0007669"/>
    <property type="project" value="UniProtKB-KW"/>
</dbReference>
<dbReference type="GO" id="GO:0008170">
    <property type="term" value="F:N-methyltransferase activity"/>
    <property type="evidence" value="ECO:0007669"/>
    <property type="project" value="InterPro"/>
</dbReference>
<dbReference type="GO" id="GO:0009007">
    <property type="term" value="F:site-specific DNA-methyltransferase (adenine-specific) activity"/>
    <property type="evidence" value="ECO:0007669"/>
    <property type="project" value="UniProtKB-EC"/>
</dbReference>
<dbReference type="GO" id="GO:0009307">
    <property type="term" value="P:DNA restriction-modification system"/>
    <property type="evidence" value="ECO:0007669"/>
    <property type="project" value="UniProtKB-KW"/>
</dbReference>
<dbReference type="GO" id="GO:0032259">
    <property type="term" value="P:methylation"/>
    <property type="evidence" value="ECO:0007669"/>
    <property type="project" value="UniProtKB-KW"/>
</dbReference>
<dbReference type="FunFam" id="1.20.1260.30:FF:000001">
    <property type="entry name" value="Type I restriction enzyme StySJI M protein"/>
    <property type="match status" value="1"/>
</dbReference>
<dbReference type="FunFam" id="3.40.50.150:FF:000284">
    <property type="entry name" value="Type I restriction enzyme StySJI M protein"/>
    <property type="match status" value="1"/>
</dbReference>
<dbReference type="Gene3D" id="1.20.1260.30">
    <property type="match status" value="1"/>
</dbReference>
<dbReference type="Gene3D" id="3.40.50.150">
    <property type="entry name" value="Vaccinia Virus protein VP39"/>
    <property type="match status" value="1"/>
</dbReference>
<dbReference type="InterPro" id="IPR022749">
    <property type="entry name" value="D12N6_MeTrfase_N"/>
</dbReference>
<dbReference type="InterPro" id="IPR051537">
    <property type="entry name" value="DNA_Adenine_Mtase"/>
</dbReference>
<dbReference type="InterPro" id="IPR003356">
    <property type="entry name" value="DNA_methylase_A-5"/>
</dbReference>
<dbReference type="InterPro" id="IPR002052">
    <property type="entry name" value="DNA_methylase_N6_adenine_CS"/>
</dbReference>
<dbReference type="InterPro" id="IPR029063">
    <property type="entry name" value="SAM-dependent_MTases_sf"/>
</dbReference>
<dbReference type="InterPro" id="IPR038333">
    <property type="entry name" value="T1MK-like_N_sf"/>
</dbReference>
<dbReference type="PANTHER" id="PTHR42933">
    <property type="entry name" value="SLR6095 PROTEIN"/>
    <property type="match status" value="1"/>
</dbReference>
<dbReference type="PANTHER" id="PTHR42933:SF4">
    <property type="entry name" value="TYPE I RESTRICTION ENZYME ECOKI METHYLASE SUBUNIT"/>
    <property type="match status" value="1"/>
</dbReference>
<dbReference type="Pfam" id="PF12161">
    <property type="entry name" value="HsdM_N"/>
    <property type="match status" value="1"/>
</dbReference>
<dbReference type="Pfam" id="PF02384">
    <property type="entry name" value="N6_Mtase"/>
    <property type="match status" value="1"/>
</dbReference>
<dbReference type="PRINTS" id="PR00507">
    <property type="entry name" value="N12N6MTFRASE"/>
</dbReference>
<dbReference type="SUPFAM" id="SSF53335">
    <property type="entry name" value="S-adenosyl-L-methionine-dependent methyltransferases"/>
    <property type="match status" value="1"/>
</dbReference>
<dbReference type="PROSITE" id="PS00092">
    <property type="entry name" value="N6_MTASE"/>
    <property type="match status" value="1"/>
</dbReference>